<dbReference type="EC" id="2.7.7.3" evidence="1"/>
<dbReference type="EMBL" id="AP009380">
    <property type="protein sequence ID" value="BAG34112.1"/>
    <property type="molecule type" value="Genomic_DNA"/>
</dbReference>
<dbReference type="RefSeq" id="WP_005873821.1">
    <property type="nucleotide sequence ID" value="NZ_CP025930.1"/>
</dbReference>
<dbReference type="SMR" id="B2RL67"/>
<dbReference type="GeneID" id="57239832"/>
<dbReference type="KEGG" id="pgn:PGN_1593"/>
<dbReference type="eggNOG" id="COG0669">
    <property type="taxonomic scope" value="Bacteria"/>
</dbReference>
<dbReference type="HOGENOM" id="CLU_100149_1_1_10"/>
<dbReference type="OrthoDB" id="9806661at2"/>
<dbReference type="BioCyc" id="PGIN431947:G1G2V-1794-MONOMER"/>
<dbReference type="UniPathway" id="UPA00241">
    <property type="reaction ID" value="UER00355"/>
</dbReference>
<dbReference type="Proteomes" id="UP000008842">
    <property type="component" value="Chromosome"/>
</dbReference>
<dbReference type="GO" id="GO:0005737">
    <property type="term" value="C:cytoplasm"/>
    <property type="evidence" value="ECO:0007669"/>
    <property type="project" value="UniProtKB-SubCell"/>
</dbReference>
<dbReference type="GO" id="GO:0005524">
    <property type="term" value="F:ATP binding"/>
    <property type="evidence" value="ECO:0007669"/>
    <property type="project" value="UniProtKB-KW"/>
</dbReference>
<dbReference type="GO" id="GO:0004595">
    <property type="term" value="F:pantetheine-phosphate adenylyltransferase activity"/>
    <property type="evidence" value="ECO:0007669"/>
    <property type="project" value="UniProtKB-UniRule"/>
</dbReference>
<dbReference type="GO" id="GO:0015937">
    <property type="term" value="P:coenzyme A biosynthetic process"/>
    <property type="evidence" value="ECO:0007669"/>
    <property type="project" value="UniProtKB-UniRule"/>
</dbReference>
<dbReference type="Gene3D" id="3.40.50.620">
    <property type="entry name" value="HUPs"/>
    <property type="match status" value="1"/>
</dbReference>
<dbReference type="HAMAP" id="MF_00151">
    <property type="entry name" value="PPAT_bact"/>
    <property type="match status" value="1"/>
</dbReference>
<dbReference type="InterPro" id="IPR004821">
    <property type="entry name" value="Cyt_trans-like"/>
</dbReference>
<dbReference type="InterPro" id="IPR001980">
    <property type="entry name" value="PPAT"/>
</dbReference>
<dbReference type="InterPro" id="IPR014729">
    <property type="entry name" value="Rossmann-like_a/b/a_fold"/>
</dbReference>
<dbReference type="NCBIfam" id="TIGR01510">
    <property type="entry name" value="coaD_prev_kdtB"/>
    <property type="match status" value="1"/>
</dbReference>
<dbReference type="NCBIfam" id="TIGR00125">
    <property type="entry name" value="cyt_tran_rel"/>
    <property type="match status" value="1"/>
</dbReference>
<dbReference type="PANTHER" id="PTHR21342">
    <property type="entry name" value="PHOSPHOPANTETHEINE ADENYLYLTRANSFERASE"/>
    <property type="match status" value="1"/>
</dbReference>
<dbReference type="PANTHER" id="PTHR21342:SF1">
    <property type="entry name" value="PHOSPHOPANTETHEINE ADENYLYLTRANSFERASE"/>
    <property type="match status" value="1"/>
</dbReference>
<dbReference type="Pfam" id="PF01467">
    <property type="entry name" value="CTP_transf_like"/>
    <property type="match status" value="1"/>
</dbReference>
<dbReference type="PRINTS" id="PR01020">
    <property type="entry name" value="LPSBIOSNTHSS"/>
</dbReference>
<dbReference type="SUPFAM" id="SSF52374">
    <property type="entry name" value="Nucleotidylyl transferase"/>
    <property type="match status" value="1"/>
</dbReference>
<protein>
    <recommendedName>
        <fullName evidence="1">Phosphopantetheine adenylyltransferase</fullName>
        <ecNumber evidence="1">2.7.7.3</ecNumber>
    </recommendedName>
    <alternativeName>
        <fullName evidence="1">Dephospho-CoA pyrophosphorylase</fullName>
    </alternativeName>
    <alternativeName>
        <fullName evidence="1">Pantetheine-phosphate adenylyltransferase</fullName>
        <shortName evidence="1">PPAT</shortName>
    </alternativeName>
</protein>
<sequence length="153" mass="16993">MKKNIALFAGSFDPFTRGHADIVERSLAIFDEVIIAIGINEQKRTLFSAERRQEQIARYYASRPAIGVITYSGLTVDLVRQTGATALVRGIRSGSDFEYERTLADLNRHLSGVDTVLLCTDTRLSFISSSAVRELISFGRDVSDFLPEGFVLD</sequence>
<gene>
    <name evidence="1" type="primary">coaD</name>
    <name type="ordered locus">PGN_1593</name>
</gene>
<feature type="chain" id="PRO_1000096822" description="Phosphopantetheine adenylyltransferase">
    <location>
        <begin position="1"/>
        <end position="153"/>
    </location>
</feature>
<feature type="binding site" evidence="1">
    <location>
        <begin position="11"/>
        <end position="12"/>
    </location>
    <ligand>
        <name>ATP</name>
        <dbReference type="ChEBI" id="CHEBI:30616"/>
    </ligand>
</feature>
<feature type="binding site" evidence="1">
    <location>
        <position position="11"/>
    </location>
    <ligand>
        <name>substrate</name>
    </ligand>
</feature>
<feature type="binding site" evidence="1">
    <location>
        <position position="19"/>
    </location>
    <ligand>
        <name>ATP</name>
        <dbReference type="ChEBI" id="CHEBI:30616"/>
    </ligand>
</feature>
<feature type="binding site" evidence="1">
    <location>
        <position position="43"/>
    </location>
    <ligand>
        <name>substrate</name>
    </ligand>
</feature>
<feature type="binding site" evidence="1">
    <location>
        <position position="75"/>
    </location>
    <ligand>
        <name>substrate</name>
    </ligand>
</feature>
<feature type="binding site" evidence="1">
    <location>
        <position position="89"/>
    </location>
    <ligand>
        <name>substrate</name>
    </ligand>
</feature>
<feature type="binding site" evidence="1">
    <location>
        <begin position="90"/>
        <end position="92"/>
    </location>
    <ligand>
        <name>ATP</name>
        <dbReference type="ChEBI" id="CHEBI:30616"/>
    </ligand>
</feature>
<feature type="binding site" evidence="1">
    <location>
        <position position="100"/>
    </location>
    <ligand>
        <name>ATP</name>
        <dbReference type="ChEBI" id="CHEBI:30616"/>
    </ligand>
</feature>
<feature type="binding site" evidence="1">
    <location>
        <begin position="124"/>
        <end position="130"/>
    </location>
    <ligand>
        <name>ATP</name>
        <dbReference type="ChEBI" id="CHEBI:30616"/>
    </ligand>
</feature>
<feature type="site" description="Transition state stabilizer" evidence="1">
    <location>
        <position position="19"/>
    </location>
</feature>
<keyword id="KW-0067">ATP-binding</keyword>
<keyword id="KW-0173">Coenzyme A biosynthesis</keyword>
<keyword id="KW-0963">Cytoplasm</keyword>
<keyword id="KW-0460">Magnesium</keyword>
<keyword id="KW-0547">Nucleotide-binding</keyword>
<keyword id="KW-0548">Nucleotidyltransferase</keyword>
<keyword id="KW-0808">Transferase</keyword>
<comment type="function">
    <text evidence="1">Reversibly transfers an adenylyl group from ATP to 4'-phosphopantetheine, yielding dephospho-CoA (dPCoA) and pyrophosphate.</text>
</comment>
<comment type="catalytic activity">
    <reaction evidence="1">
        <text>(R)-4'-phosphopantetheine + ATP + H(+) = 3'-dephospho-CoA + diphosphate</text>
        <dbReference type="Rhea" id="RHEA:19801"/>
        <dbReference type="ChEBI" id="CHEBI:15378"/>
        <dbReference type="ChEBI" id="CHEBI:30616"/>
        <dbReference type="ChEBI" id="CHEBI:33019"/>
        <dbReference type="ChEBI" id="CHEBI:57328"/>
        <dbReference type="ChEBI" id="CHEBI:61723"/>
        <dbReference type="EC" id="2.7.7.3"/>
    </reaction>
</comment>
<comment type="cofactor">
    <cofactor evidence="1">
        <name>Mg(2+)</name>
        <dbReference type="ChEBI" id="CHEBI:18420"/>
    </cofactor>
</comment>
<comment type="pathway">
    <text evidence="1">Cofactor biosynthesis; coenzyme A biosynthesis; CoA from (R)-pantothenate: step 4/5.</text>
</comment>
<comment type="subunit">
    <text evidence="1">Homohexamer.</text>
</comment>
<comment type="subcellular location">
    <subcellularLocation>
        <location evidence="1">Cytoplasm</location>
    </subcellularLocation>
</comment>
<comment type="similarity">
    <text evidence="1">Belongs to the bacterial CoaD family.</text>
</comment>
<accession>B2RL67</accession>
<organism>
    <name type="scientific">Porphyromonas gingivalis (strain ATCC 33277 / DSM 20709 / CIP 103683 / JCM 12257 / NCTC 11834 / 2561)</name>
    <dbReference type="NCBI Taxonomy" id="431947"/>
    <lineage>
        <taxon>Bacteria</taxon>
        <taxon>Pseudomonadati</taxon>
        <taxon>Bacteroidota</taxon>
        <taxon>Bacteroidia</taxon>
        <taxon>Bacteroidales</taxon>
        <taxon>Porphyromonadaceae</taxon>
        <taxon>Porphyromonas</taxon>
    </lineage>
</organism>
<name>COAD_PORG3</name>
<proteinExistence type="inferred from homology"/>
<evidence type="ECO:0000255" key="1">
    <source>
        <dbReference type="HAMAP-Rule" id="MF_00151"/>
    </source>
</evidence>
<reference key="1">
    <citation type="journal article" date="2008" name="DNA Res.">
        <title>Determination of the genome sequence of Porphyromonas gingivalis strain ATCC 33277 and genomic comparison with strain W83 revealed extensive genome rearrangements in P. gingivalis.</title>
        <authorList>
            <person name="Naito M."/>
            <person name="Hirakawa H."/>
            <person name="Yamashita A."/>
            <person name="Ohara N."/>
            <person name="Shoji M."/>
            <person name="Yukitake H."/>
            <person name="Nakayama K."/>
            <person name="Toh H."/>
            <person name="Yoshimura F."/>
            <person name="Kuhara S."/>
            <person name="Hattori M."/>
            <person name="Hayashi T."/>
            <person name="Nakayama K."/>
        </authorList>
    </citation>
    <scope>NUCLEOTIDE SEQUENCE [LARGE SCALE GENOMIC DNA]</scope>
    <source>
        <strain>ATCC 33277 / DSM 20709 / CIP 103683 / JCM 12257 / NCTC 11834 / 2561</strain>
    </source>
</reference>